<dbReference type="EMBL" id="CP001227">
    <property type="protein sequence ID" value="ACR47684.1"/>
    <property type="molecule type" value="Genomic_DNA"/>
</dbReference>
<dbReference type="RefSeq" id="WP_012736884.1">
    <property type="nucleotide sequence ID" value="NC_012730.1"/>
</dbReference>
<dbReference type="SMR" id="C4K287"/>
<dbReference type="KEGG" id="rpk:RPR_05540"/>
<dbReference type="HOGENOM" id="CLU_108953_0_1_5"/>
<dbReference type="Proteomes" id="UP000005015">
    <property type="component" value="Chromosome"/>
</dbReference>
<dbReference type="GO" id="GO:0005829">
    <property type="term" value="C:cytosol"/>
    <property type="evidence" value="ECO:0007669"/>
    <property type="project" value="TreeGrafter"/>
</dbReference>
<dbReference type="GO" id="GO:0003723">
    <property type="term" value="F:RNA binding"/>
    <property type="evidence" value="ECO:0007669"/>
    <property type="project" value="UniProtKB-UniRule"/>
</dbReference>
<dbReference type="GO" id="GO:0070929">
    <property type="term" value="P:trans-translation"/>
    <property type="evidence" value="ECO:0007669"/>
    <property type="project" value="UniProtKB-UniRule"/>
</dbReference>
<dbReference type="CDD" id="cd09294">
    <property type="entry name" value="SmpB"/>
    <property type="match status" value="1"/>
</dbReference>
<dbReference type="Gene3D" id="2.40.280.10">
    <property type="match status" value="1"/>
</dbReference>
<dbReference type="HAMAP" id="MF_00023">
    <property type="entry name" value="SmpB"/>
    <property type="match status" value="1"/>
</dbReference>
<dbReference type="InterPro" id="IPR023620">
    <property type="entry name" value="SmpB"/>
</dbReference>
<dbReference type="InterPro" id="IPR000037">
    <property type="entry name" value="SsrA-bd_prot"/>
</dbReference>
<dbReference type="NCBIfam" id="NF003843">
    <property type="entry name" value="PRK05422.1"/>
    <property type="match status" value="1"/>
</dbReference>
<dbReference type="NCBIfam" id="TIGR00086">
    <property type="entry name" value="smpB"/>
    <property type="match status" value="1"/>
</dbReference>
<dbReference type="PANTHER" id="PTHR30308:SF2">
    <property type="entry name" value="SSRA-BINDING PROTEIN"/>
    <property type="match status" value="1"/>
</dbReference>
<dbReference type="PANTHER" id="PTHR30308">
    <property type="entry name" value="TMRNA-BINDING COMPONENT OF TRANS-TRANSLATION TAGGING COMPLEX"/>
    <property type="match status" value="1"/>
</dbReference>
<dbReference type="Pfam" id="PF01668">
    <property type="entry name" value="SmpB"/>
    <property type="match status" value="1"/>
</dbReference>
<dbReference type="SUPFAM" id="SSF74982">
    <property type="entry name" value="Small protein B (SmpB)"/>
    <property type="match status" value="1"/>
</dbReference>
<comment type="function">
    <text evidence="1">Required for rescue of stalled ribosomes mediated by trans-translation. Binds to transfer-messenger RNA (tmRNA), required for stable association of tmRNA with ribosomes. tmRNA and SmpB together mimic tRNA shape, replacing the anticodon stem-loop with SmpB. tmRNA is encoded by the ssrA gene; the 2 termini fold to resemble tRNA(Ala) and it encodes a 'tag peptide', a short internal open reading frame. During trans-translation Ala-aminoacylated tmRNA acts like a tRNA, entering the A-site of stalled ribosomes, displacing the stalled mRNA. The ribosome then switches to translate the ORF on the tmRNA; the nascent peptide is terminated with the 'tag peptide' encoded by the tmRNA and targeted for degradation. The ribosome is freed to recommence translation, which seems to be the essential function of trans-translation.</text>
</comment>
<comment type="subcellular location">
    <subcellularLocation>
        <location evidence="1">Cytoplasm</location>
    </subcellularLocation>
    <text evidence="1">The tmRNA-SmpB complex associates with stalled 70S ribosomes.</text>
</comment>
<comment type="similarity">
    <text evidence="1">Belongs to the SmpB family.</text>
</comment>
<proteinExistence type="inferred from homology"/>
<feature type="chain" id="PRO_1000201941" description="SsrA-binding protein">
    <location>
        <begin position="1"/>
        <end position="152"/>
    </location>
</feature>
<sequence>MTEYKKVIAHNKKALFQYFIEERLEAGIVLKGSEVRSLRQGKASIEESHAADTGHEVFLYNCHIAEYEKANRFNHATRRPRKLLLHTKEIKKIIGRIRIKGYTLVALSMYFNKKNKVKVELGIAKGKKLHDKRESIKEKDWKRDQSRLIRQK</sequence>
<name>SSRP_RICPU</name>
<accession>C4K287</accession>
<keyword id="KW-0963">Cytoplasm</keyword>
<keyword id="KW-0694">RNA-binding</keyword>
<protein>
    <recommendedName>
        <fullName evidence="1">SsrA-binding protein</fullName>
    </recommendedName>
    <alternativeName>
        <fullName evidence="1">Small protein B</fullName>
    </alternativeName>
</protein>
<gene>
    <name evidence="1" type="primary">smpB</name>
    <name type="ordered locus">RPR_05540</name>
</gene>
<reference key="1">
    <citation type="journal article" date="2009" name="PLoS ONE">
        <title>Genome sequence of the endosymbiont Rickettsia peacockii and comparison with virulent Rickettsia rickettsii: identification of virulence factors.</title>
        <authorList>
            <person name="Felsheim R.F."/>
            <person name="Kurtti T.J."/>
            <person name="Munderloh U.G."/>
        </authorList>
    </citation>
    <scope>NUCLEOTIDE SEQUENCE [LARGE SCALE GENOMIC DNA]</scope>
    <source>
        <strain>Rustic</strain>
    </source>
</reference>
<organism>
    <name type="scientific">Rickettsia peacockii (strain Rustic)</name>
    <dbReference type="NCBI Taxonomy" id="562019"/>
    <lineage>
        <taxon>Bacteria</taxon>
        <taxon>Pseudomonadati</taxon>
        <taxon>Pseudomonadota</taxon>
        <taxon>Alphaproteobacteria</taxon>
        <taxon>Rickettsiales</taxon>
        <taxon>Rickettsiaceae</taxon>
        <taxon>Rickettsieae</taxon>
        <taxon>Rickettsia</taxon>
        <taxon>spotted fever group</taxon>
    </lineage>
</organism>
<evidence type="ECO:0000255" key="1">
    <source>
        <dbReference type="HAMAP-Rule" id="MF_00023"/>
    </source>
</evidence>